<reference key="1">
    <citation type="submission" date="2005-05" db="EMBL/GenBank/DDBJ databases">
        <authorList>
            <consortium name="NIH - Zebrafish Gene Collection (ZGC) project"/>
        </authorList>
    </citation>
    <scope>NUCLEOTIDE SEQUENCE [LARGE SCALE MRNA]</scope>
    <source>
        <tissue>Embryo</tissue>
    </source>
</reference>
<comment type="function">
    <text evidence="1">May be an activating cyclin for the cyclin-associated kinase CDK10.</text>
</comment>
<comment type="similarity">
    <text evidence="2">Belongs to the cyclin family. Cyclin-like FAM58 subfamily.</text>
</comment>
<feature type="chain" id="PRO_0000297570" description="Cyclin-Q">
    <location>
        <begin position="1"/>
        <end position="247"/>
    </location>
</feature>
<dbReference type="EMBL" id="BC095369">
    <property type="protein sequence ID" value="AAH95369.1"/>
    <property type="molecule type" value="mRNA"/>
</dbReference>
<dbReference type="RefSeq" id="NP_001018459.1">
    <property type="nucleotide sequence ID" value="NM_001020623.1"/>
</dbReference>
<dbReference type="SMR" id="Q503D6"/>
<dbReference type="FunCoup" id="Q503D6">
    <property type="interactions" value="116"/>
</dbReference>
<dbReference type="STRING" id="7955.ENSDARP00000054658"/>
<dbReference type="PaxDb" id="7955-ENSDARP00000054658"/>
<dbReference type="GeneID" id="553650"/>
<dbReference type="KEGG" id="dre:553650"/>
<dbReference type="AGR" id="ZFIN:ZDB-GENE-050522-495"/>
<dbReference type="CTD" id="92002"/>
<dbReference type="ZFIN" id="ZDB-GENE-050522-495">
    <property type="gene designation" value="ccnq"/>
</dbReference>
<dbReference type="eggNOG" id="KOG0834">
    <property type="taxonomic scope" value="Eukaryota"/>
</dbReference>
<dbReference type="InParanoid" id="Q503D6"/>
<dbReference type="OrthoDB" id="79090at2759"/>
<dbReference type="PhylomeDB" id="Q503D6"/>
<dbReference type="PRO" id="PR:Q503D6"/>
<dbReference type="Proteomes" id="UP000000437">
    <property type="component" value="Alternate scaffold 23"/>
</dbReference>
<dbReference type="Proteomes" id="UP000000437">
    <property type="component" value="Chromosome 23"/>
</dbReference>
<dbReference type="GO" id="GO:0005634">
    <property type="term" value="C:nucleus"/>
    <property type="evidence" value="ECO:0000318"/>
    <property type="project" value="GO_Central"/>
</dbReference>
<dbReference type="GO" id="GO:0016538">
    <property type="term" value="F:cyclin-dependent protein serine/threonine kinase regulator activity"/>
    <property type="evidence" value="ECO:0000318"/>
    <property type="project" value="GO_Central"/>
</dbReference>
<dbReference type="GO" id="GO:0006357">
    <property type="term" value="P:regulation of transcription by RNA polymerase II"/>
    <property type="evidence" value="ECO:0007669"/>
    <property type="project" value="InterPro"/>
</dbReference>
<dbReference type="CDD" id="cd20534">
    <property type="entry name" value="CYCLIN_CCNM_CCNQ_rpt1"/>
    <property type="match status" value="1"/>
</dbReference>
<dbReference type="CDD" id="cd20535">
    <property type="entry name" value="CYCLIN_CCNM_CCNQ_rpt2"/>
    <property type="match status" value="1"/>
</dbReference>
<dbReference type="FunFam" id="1.10.472.10:FF:000179">
    <property type="entry name" value="Cyclin Q"/>
    <property type="match status" value="1"/>
</dbReference>
<dbReference type="FunFam" id="1.10.472.10:FF:000042">
    <property type="entry name" value="FAM58A isoform 1"/>
    <property type="match status" value="1"/>
</dbReference>
<dbReference type="Gene3D" id="1.10.472.10">
    <property type="entry name" value="Cyclin-like"/>
    <property type="match status" value="2"/>
</dbReference>
<dbReference type="InterPro" id="IPR013763">
    <property type="entry name" value="Cyclin-like_dom"/>
</dbReference>
<dbReference type="InterPro" id="IPR036915">
    <property type="entry name" value="Cyclin-like_sf"/>
</dbReference>
<dbReference type="InterPro" id="IPR048055">
    <property type="entry name" value="Cyclin-Q_first_cyclin_box"/>
</dbReference>
<dbReference type="InterPro" id="IPR048053">
    <property type="entry name" value="Cyclin-Q_second_cyclin_box"/>
</dbReference>
<dbReference type="InterPro" id="IPR043198">
    <property type="entry name" value="Cyclin/Ssn8"/>
</dbReference>
<dbReference type="InterPro" id="IPR006671">
    <property type="entry name" value="Cyclin_N"/>
</dbReference>
<dbReference type="PANTHER" id="PTHR10026">
    <property type="entry name" value="CYCLIN"/>
    <property type="match status" value="1"/>
</dbReference>
<dbReference type="Pfam" id="PF00134">
    <property type="entry name" value="Cyclin_N"/>
    <property type="match status" value="1"/>
</dbReference>
<dbReference type="PIRSF" id="PIRSF028758">
    <property type="entry name" value="Cyclin, C/H/G types"/>
    <property type="match status" value="1"/>
</dbReference>
<dbReference type="SMART" id="SM00385">
    <property type="entry name" value="CYCLIN"/>
    <property type="match status" value="2"/>
</dbReference>
<dbReference type="SUPFAM" id="SSF47954">
    <property type="entry name" value="Cyclin-like"/>
    <property type="match status" value="2"/>
</dbReference>
<name>CCNQ_DANRE</name>
<protein>
    <recommendedName>
        <fullName>Cyclin-Q</fullName>
    </recommendedName>
    <alternativeName>
        <fullName>Cyclin-related protein FAM58A</fullName>
    </alternativeName>
</protein>
<organism>
    <name type="scientific">Danio rerio</name>
    <name type="common">Zebrafish</name>
    <name type="synonym">Brachydanio rerio</name>
    <dbReference type="NCBI Taxonomy" id="7955"/>
    <lineage>
        <taxon>Eukaryota</taxon>
        <taxon>Metazoa</taxon>
        <taxon>Chordata</taxon>
        <taxon>Craniata</taxon>
        <taxon>Vertebrata</taxon>
        <taxon>Euteleostomi</taxon>
        <taxon>Actinopterygii</taxon>
        <taxon>Neopterygii</taxon>
        <taxon>Teleostei</taxon>
        <taxon>Ostariophysi</taxon>
        <taxon>Cypriniformes</taxon>
        <taxon>Danionidae</taxon>
        <taxon>Danioninae</taxon>
        <taxon>Danio</taxon>
    </lineage>
</organism>
<gene>
    <name type="primary">ccnq</name>
    <name type="synonym">fam58a</name>
    <name type="ORF">zgc:110684</name>
</gene>
<accession>Q503D6</accession>
<sequence>MSAHASTSAAANEARGRRSAEDVEYSKTHFRVCRFITETGVKLGMRSVPMATACVLYHRFFQSASLQIYEPYLVAMSAIHLAGKVEEQHLRTRDIINVCHRYFHPDSEPLELNGKFWELRDSIVQCELLILRQLNFQVTFEHPHKYLLHYLLSVRSLLNRHAWSRTPIAETALAVLKDSYHGSVCVRHRPQHLALTALYLALQTYGVQLPRGELEWWQVVCADITKAQIETIMSELLQLYDMEAKCT</sequence>
<evidence type="ECO:0000250" key="1"/>
<evidence type="ECO:0000305" key="2"/>
<keyword id="KW-0195">Cyclin</keyword>
<keyword id="KW-1185">Reference proteome</keyword>
<proteinExistence type="evidence at transcript level"/>